<name>GGAA_BACSU</name>
<evidence type="ECO:0000305" key="1"/>
<accession>P46917</accession>
<sequence>MFSIIIPIYNSENYLRYSIESVLNQSIGFKENIELILIDDGSVDSSPQICESFKNLYPNNIKIMKIENSGPSAARNCGLSNVSERSKFIGFLDSDDAFSQNALQSVYDFFCDSEHVNIAVLPVYYTGEKEGGHKLNNRFEKGTRVINILNDYKAIHFYIGGTFYRRHTLTSTVLFDESIKFWEDAIFFNQLLLKEKRYGAVAEGKYFYRKRKEQDSLVDRSWFNKKRYTYLLNECYMTLLMDSFNKYDIVLPYLQFLIVYHIKLFLYPNYRDVYKSVLDQQEQRVFVDDFIKVLKFIDPQFIKEQDMPMYYKEFMFHLLKENTEALENIKKERVLHSSCTVTSAKIKGLRLELTGHFINQYYEMKENDRIYIKYFKRLKKCKRKELKKTIEVWGYKLRDFRYAGFVVEIPIWAFAFDFVLKTPNDSLELNHVNIFKSLLTRVFKKR</sequence>
<protein>
    <recommendedName>
        <fullName>Minor teichoic acid biosynthesis protein GgaA</fullName>
    </recommendedName>
</protein>
<dbReference type="EMBL" id="U13979">
    <property type="protein sequence ID" value="AAA73512.1"/>
    <property type="molecule type" value="Genomic_DNA"/>
</dbReference>
<dbReference type="EMBL" id="AL009126">
    <property type="protein sequence ID" value="CAB15586.1"/>
    <property type="molecule type" value="Genomic_DNA"/>
</dbReference>
<dbReference type="PIR" id="D69631">
    <property type="entry name" value="D69631"/>
</dbReference>
<dbReference type="RefSeq" id="NP_391449.1">
    <property type="nucleotide sequence ID" value="NC_000964.3"/>
</dbReference>
<dbReference type="RefSeq" id="WP_009968267.1">
    <property type="nucleotide sequence ID" value="NZ_OZ025638.1"/>
</dbReference>
<dbReference type="SMR" id="P46917"/>
<dbReference type="FunCoup" id="P46917">
    <property type="interactions" value="6"/>
</dbReference>
<dbReference type="STRING" id="224308.BSU35690"/>
<dbReference type="CAZy" id="GT2">
    <property type="family name" value="Glycosyltransferase Family 2"/>
</dbReference>
<dbReference type="PaxDb" id="224308-BSU35690"/>
<dbReference type="KEGG" id="bsu:BSU35690"/>
<dbReference type="PATRIC" id="fig|224308.179.peg.3861"/>
<dbReference type="eggNOG" id="COG0463">
    <property type="taxonomic scope" value="Bacteria"/>
</dbReference>
<dbReference type="InParanoid" id="P46917"/>
<dbReference type="OrthoDB" id="396512at2"/>
<dbReference type="PhylomeDB" id="P46917"/>
<dbReference type="BioCyc" id="BSUB:BSU35690-MONOMER"/>
<dbReference type="BioCyc" id="MetaCyc:BSU35690-MONOMER"/>
<dbReference type="UniPathway" id="UPA00789"/>
<dbReference type="Proteomes" id="UP000001570">
    <property type="component" value="Chromosome"/>
</dbReference>
<dbReference type="GO" id="GO:0016757">
    <property type="term" value="F:glycosyltransferase activity"/>
    <property type="evidence" value="ECO:0000318"/>
    <property type="project" value="GO_Central"/>
</dbReference>
<dbReference type="GO" id="GO:0016758">
    <property type="term" value="F:hexosyltransferase activity"/>
    <property type="evidence" value="ECO:0007669"/>
    <property type="project" value="UniProtKB-ARBA"/>
</dbReference>
<dbReference type="GO" id="GO:0071555">
    <property type="term" value="P:cell wall organization"/>
    <property type="evidence" value="ECO:0007669"/>
    <property type="project" value="UniProtKB-KW"/>
</dbReference>
<dbReference type="GO" id="GO:0019350">
    <property type="term" value="P:teichoic acid biosynthetic process"/>
    <property type="evidence" value="ECO:0007669"/>
    <property type="project" value="UniProtKB-KW"/>
</dbReference>
<dbReference type="CDD" id="cd00761">
    <property type="entry name" value="Glyco_tranf_GTA_type"/>
    <property type="match status" value="1"/>
</dbReference>
<dbReference type="Gene3D" id="3.90.550.10">
    <property type="entry name" value="Spore Coat Polysaccharide Biosynthesis Protein SpsA, Chain A"/>
    <property type="match status" value="1"/>
</dbReference>
<dbReference type="InterPro" id="IPR001173">
    <property type="entry name" value="Glyco_trans_2-like"/>
</dbReference>
<dbReference type="InterPro" id="IPR029044">
    <property type="entry name" value="Nucleotide-diphossugar_trans"/>
</dbReference>
<dbReference type="PANTHER" id="PTHR22916">
    <property type="entry name" value="GLYCOSYLTRANSFERASE"/>
    <property type="match status" value="1"/>
</dbReference>
<dbReference type="PANTHER" id="PTHR22916:SF3">
    <property type="entry name" value="UDP-GLCNAC:BETAGAL BETA-1,3-N-ACETYLGLUCOSAMINYLTRANSFERASE-LIKE PROTEIN 1"/>
    <property type="match status" value="1"/>
</dbReference>
<dbReference type="Pfam" id="PF00535">
    <property type="entry name" value="Glycos_transf_2"/>
    <property type="match status" value="1"/>
</dbReference>
<dbReference type="SUPFAM" id="SSF53448">
    <property type="entry name" value="Nucleotide-diphospho-sugar transferases"/>
    <property type="match status" value="1"/>
</dbReference>
<feature type="chain" id="PRO_0000059187" description="Minor teichoic acid biosynthesis protein GgaA">
    <location>
        <begin position="1"/>
        <end position="446"/>
    </location>
</feature>
<proteinExistence type="inferred from homology"/>
<gene>
    <name type="primary">ggaA</name>
    <name type="ordered locus">BSU35690</name>
</gene>
<keyword id="KW-0961">Cell wall biogenesis/degradation</keyword>
<keyword id="KW-0328">Glycosyltransferase</keyword>
<keyword id="KW-1185">Reference proteome</keyword>
<keyword id="KW-0777">Teichoic acid biosynthesis</keyword>
<keyword id="KW-0808">Transferase</keyword>
<comment type="function">
    <text>Involved in the biosynthesis of galactosamine-containing minor teichoic acid, a non-essential cell wall polymer in B.subtilis 168.</text>
</comment>
<comment type="pathway">
    <text>Cell wall biogenesis; poly(glucopyranosyl N-acetylgalactosamine 1-phosphate) teichoic acid biosynthesis.</text>
</comment>
<comment type="similarity">
    <text evidence="1">Belongs to the glycosyltransferase 2 family.</text>
</comment>
<reference key="1">
    <citation type="submission" date="1994-08" db="EMBL/GenBank/DDBJ databases">
        <title>Sequencing and analysis of two gga genes associated with the synthesis of the minor teichoic acid of Bacillus subbtilis 168.</title>
        <authorList>
            <person name="Freymond P.-P."/>
            <person name="Karamata D."/>
        </authorList>
    </citation>
    <scope>NUCLEOTIDE SEQUENCE [GENOMIC DNA]</scope>
    <source>
        <strain>168</strain>
    </source>
</reference>
<reference key="2">
    <citation type="journal article" date="1997" name="Nature">
        <title>The complete genome sequence of the Gram-positive bacterium Bacillus subtilis.</title>
        <authorList>
            <person name="Kunst F."/>
            <person name="Ogasawara N."/>
            <person name="Moszer I."/>
            <person name="Albertini A.M."/>
            <person name="Alloni G."/>
            <person name="Azevedo V."/>
            <person name="Bertero M.G."/>
            <person name="Bessieres P."/>
            <person name="Bolotin A."/>
            <person name="Borchert S."/>
            <person name="Borriss R."/>
            <person name="Boursier L."/>
            <person name="Brans A."/>
            <person name="Braun M."/>
            <person name="Brignell S.C."/>
            <person name="Bron S."/>
            <person name="Brouillet S."/>
            <person name="Bruschi C.V."/>
            <person name="Caldwell B."/>
            <person name="Capuano V."/>
            <person name="Carter N.M."/>
            <person name="Choi S.-K."/>
            <person name="Codani J.-J."/>
            <person name="Connerton I.F."/>
            <person name="Cummings N.J."/>
            <person name="Daniel R.A."/>
            <person name="Denizot F."/>
            <person name="Devine K.M."/>
            <person name="Duesterhoeft A."/>
            <person name="Ehrlich S.D."/>
            <person name="Emmerson P.T."/>
            <person name="Entian K.-D."/>
            <person name="Errington J."/>
            <person name="Fabret C."/>
            <person name="Ferrari E."/>
            <person name="Foulger D."/>
            <person name="Fritz C."/>
            <person name="Fujita M."/>
            <person name="Fujita Y."/>
            <person name="Fuma S."/>
            <person name="Galizzi A."/>
            <person name="Galleron N."/>
            <person name="Ghim S.-Y."/>
            <person name="Glaser P."/>
            <person name="Goffeau A."/>
            <person name="Golightly E.J."/>
            <person name="Grandi G."/>
            <person name="Guiseppi G."/>
            <person name="Guy B.J."/>
            <person name="Haga K."/>
            <person name="Haiech J."/>
            <person name="Harwood C.R."/>
            <person name="Henaut A."/>
            <person name="Hilbert H."/>
            <person name="Holsappel S."/>
            <person name="Hosono S."/>
            <person name="Hullo M.-F."/>
            <person name="Itaya M."/>
            <person name="Jones L.-M."/>
            <person name="Joris B."/>
            <person name="Karamata D."/>
            <person name="Kasahara Y."/>
            <person name="Klaerr-Blanchard M."/>
            <person name="Klein C."/>
            <person name="Kobayashi Y."/>
            <person name="Koetter P."/>
            <person name="Koningstein G."/>
            <person name="Krogh S."/>
            <person name="Kumano M."/>
            <person name="Kurita K."/>
            <person name="Lapidus A."/>
            <person name="Lardinois S."/>
            <person name="Lauber J."/>
            <person name="Lazarevic V."/>
            <person name="Lee S.-M."/>
            <person name="Levine A."/>
            <person name="Liu H."/>
            <person name="Masuda S."/>
            <person name="Mauel C."/>
            <person name="Medigue C."/>
            <person name="Medina N."/>
            <person name="Mellado R.P."/>
            <person name="Mizuno M."/>
            <person name="Moestl D."/>
            <person name="Nakai S."/>
            <person name="Noback M."/>
            <person name="Noone D."/>
            <person name="O'Reilly M."/>
            <person name="Ogawa K."/>
            <person name="Ogiwara A."/>
            <person name="Oudega B."/>
            <person name="Park S.-H."/>
            <person name="Parro V."/>
            <person name="Pohl T.M."/>
            <person name="Portetelle D."/>
            <person name="Porwollik S."/>
            <person name="Prescott A.M."/>
            <person name="Presecan E."/>
            <person name="Pujic P."/>
            <person name="Purnelle B."/>
            <person name="Rapoport G."/>
            <person name="Rey M."/>
            <person name="Reynolds S."/>
            <person name="Rieger M."/>
            <person name="Rivolta C."/>
            <person name="Rocha E."/>
            <person name="Roche B."/>
            <person name="Rose M."/>
            <person name="Sadaie Y."/>
            <person name="Sato T."/>
            <person name="Scanlan E."/>
            <person name="Schleich S."/>
            <person name="Schroeter R."/>
            <person name="Scoffone F."/>
            <person name="Sekiguchi J."/>
            <person name="Sekowska A."/>
            <person name="Seror S.J."/>
            <person name="Serror P."/>
            <person name="Shin B.-S."/>
            <person name="Soldo B."/>
            <person name="Sorokin A."/>
            <person name="Tacconi E."/>
            <person name="Takagi T."/>
            <person name="Takahashi H."/>
            <person name="Takemaru K."/>
            <person name="Takeuchi M."/>
            <person name="Tamakoshi A."/>
            <person name="Tanaka T."/>
            <person name="Terpstra P."/>
            <person name="Tognoni A."/>
            <person name="Tosato V."/>
            <person name="Uchiyama S."/>
            <person name="Vandenbol M."/>
            <person name="Vannier F."/>
            <person name="Vassarotti A."/>
            <person name="Viari A."/>
            <person name="Wambutt R."/>
            <person name="Wedler E."/>
            <person name="Wedler H."/>
            <person name="Weitzenegger T."/>
            <person name="Winters P."/>
            <person name="Wipat A."/>
            <person name="Yamamoto H."/>
            <person name="Yamane K."/>
            <person name="Yasumoto K."/>
            <person name="Yata K."/>
            <person name="Yoshida K."/>
            <person name="Yoshikawa H.-F."/>
            <person name="Zumstein E."/>
            <person name="Yoshikawa H."/>
            <person name="Danchin A."/>
        </authorList>
    </citation>
    <scope>NUCLEOTIDE SEQUENCE [LARGE SCALE GENOMIC DNA]</scope>
    <source>
        <strain>168</strain>
    </source>
</reference>
<organism>
    <name type="scientific">Bacillus subtilis (strain 168)</name>
    <dbReference type="NCBI Taxonomy" id="224308"/>
    <lineage>
        <taxon>Bacteria</taxon>
        <taxon>Bacillati</taxon>
        <taxon>Bacillota</taxon>
        <taxon>Bacilli</taxon>
        <taxon>Bacillales</taxon>
        <taxon>Bacillaceae</taxon>
        <taxon>Bacillus</taxon>
    </lineage>
</organism>